<keyword id="KW-0249">Electron transport</keyword>
<keyword id="KW-0349">Heme</keyword>
<keyword id="KW-0408">Iron</keyword>
<keyword id="KW-0472">Membrane</keyword>
<keyword id="KW-0479">Metal-binding</keyword>
<keyword id="KW-0496">Mitochondrion</keyword>
<keyword id="KW-0999">Mitochondrion inner membrane</keyword>
<keyword id="KW-0679">Respiratory chain</keyword>
<keyword id="KW-0812">Transmembrane</keyword>
<keyword id="KW-1133">Transmembrane helix</keyword>
<keyword id="KW-0813">Transport</keyword>
<keyword id="KW-0830">Ubiquinone</keyword>
<gene>
    <name type="primary">MT-CYB</name>
    <name type="synonym">COB</name>
    <name type="synonym">CYTB</name>
    <name type="synonym">MTCYB</name>
</gene>
<evidence type="ECO:0000250" key="1"/>
<evidence type="ECO:0000250" key="2">
    <source>
        <dbReference type="UniProtKB" id="P00157"/>
    </source>
</evidence>
<evidence type="ECO:0000255" key="3">
    <source>
        <dbReference type="PROSITE-ProRule" id="PRU00967"/>
    </source>
</evidence>
<evidence type="ECO:0000255" key="4">
    <source>
        <dbReference type="PROSITE-ProRule" id="PRU00968"/>
    </source>
</evidence>
<protein>
    <recommendedName>
        <fullName>Cytochrome b</fullName>
    </recommendedName>
    <alternativeName>
        <fullName>Complex III subunit 3</fullName>
    </alternativeName>
    <alternativeName>
        <fullName>Complex III subunit III</fullName>
    </alternativeName>
    <alternativeName>
        <fullName>Cytochrome b-c1 complex subunit 3</fullName>
    </alternativeName>
    <alternativeName>
        <fullName>Ubiquinol-cytochrome-c reductase complex cytochrome b subunit</fullName>
    </alternativeName>
</protein>
<feature type="chain" id="PRO_0000061019" description="Cytochrome b">
    <location>
        <begin position="1"/>
        <end position="380"/>
    </location>
</feature>
<feature type="transmembrane region" description="Helical" evidence="2">
    <location>
        <begin position="34"/>
        <end position="54"/>
    </location>
</feature>
<feature type="transmembrane region" description="Helical" evidence="2">
    <location>
        <begin position="78"/>
        <end position="99"/>
    </location>
</feature>
<feature type="transmembrane region" description="Helical" evidence="2">
    <location>
        <begin position="114"/>
        <end position="134"/>
    </location>
</feature>
<feature type="transmembrane region" description="Helical" evidence="2">
    <location>
        <begin position="179"/>
        <end position="199"/>
    </location>
</feature>
<feature type="transmembrane region" description="Helical" evidence="2">
    <location>
        <begin position="227"/>
        <end position="247"/>
    </location>
</feature>
<feature type="transmembrane region" description="Helical" evidence="2">
    <location>
        <begin position="289"/>
        <end position="309"/>
    </location>
</feature>
<feature type="transmembrane region" description="Helical" evidence="2">
    <location>
        <begin position="321"/>
        <end position="341"/>
    </location>
</feature>
<feature type="transmembrane region" description="Helical" evidence="2">
    <location>
        <begin position="348"/>
        <end position="368"/>
    </location>
</feature>
<feature type="binding site" description="axial binding residue" evidence="2">
    <location>
        <position position="84"/>
    </location>
    <ligand>
        <name>heme b</name>
        <dbReference type="ChEBI" id="CHEBI:60344"/>
        <label>b562</label>
    </ligand>
    <ligandPart>
        <name>Fe</name>
        <dbReference type="ChEBI" id="CHEBI:18248"/>
    </ligandPart>
</feature>
<feature type="binding site" description="axial binding residue" evidence="2">
    <location>
        <position position="98"/>
    </location>
    <ligand>
        <name>heme b</name>
        <dbReference type="ChEBI" id="CHEBI:60344"/>
        <label>b566</label>
    </ligand>
    <ligandPart>
        <name>Fe</name>
        <dbReference type="ChEBI" id="CHEBI:18248"/>
    </ligandPart>
</feature>
<feature type="binding site" description="axial binding residue" evidence="2">
    <location>
        <position position="183"/>
    </location>
    <ligand>
        <name>heme b</name>
        <dbReference type="ChEBI" id="CHEBI:60344"/>
        <label>b562</label>
    </ligand>
    <ligandPart>
        <name>Fe</name>
        <dbReference type="ChEBI" id="CHEBI:18248"/>
    </ligandPart>
</feature>
<feature type="binding site" description="axial binding residue" evidence="2">
    <location>
        <position position="197"/>
    </location>
    <ligand>
        <name>heme b</name>
        <dbReference type="ChEBI" id="CHEBI:60344"/>
        <label>b566</label>
    </ligand>
    <ligandPart>
        <name>Fe</name>
        <dbReference type="ChEBI" id="CHEBI:18248"/>
    </ligandPart>
</feature>
<feature type="binding site" evidence="2">
    <location>
        <position position="202"/>
    </location>
    <ligand>
        <name>a ubiquinone</name>
        <dbReference type="ChEBI" id="CHEBI:16389"/>
    </ligand>
</feature>
<accession>P29637</accession>
<accession>Q9TAA3</accession>
<comment type="function">
    <text evidence="2">Component of the ubiquinol-cytochrome c reductase complex (complex III or cytochrome b-c1 complex) that is part of the mitochondrial respiratory chain. The b-c1 complex mediates electron transfer from ubiquinol to cytochrome c. Contributes to the generation of a proton gradient across the mitochondrial membrane that is then used for ATP synthesis.</text>
</comment>
<comment type="cofactor">
    <cofactor evidence="2">
        <name>heme b</name>
        <dbReference type="ChEBI" id="CHEBI:60344"/>
    </cofactor>
    <text evidence="2">Binds 2 heme b groups non-covalently.</text>
</comment>
<comment type="subunit">
    <text evidence="2">The cytochrome bc1 complex contains 11 subunits: 3 respiratory subunits (MT-CYB, CYC1 and UQCRFS1), 2 core proteins (UQCRC1 and UQCRC2) and 6 low-molecular weight proteins (UQCRH/QCR6, UQCRB/QCR7, UQCRQ/QCR8, UQCR10/QCR9, UQCR11/QCR10 and a cleavage product of UQCRFS1). This cytochrome bc1 complex then forms a dimer.</text>
</comment>
<comment type="subcellular location">
    <subcellularLocation>
        <location evidence="2">Mitochondrion inner membrane</location>
        <topology evidence="2">Multi-pass membrane protein</topology>
    </subcellularLocation>
</comment>
<comment type="miscellaneous">
    <text evidence="1">Heme 1 (or BL or b562) is low-potential and absorbs at about 562 nm, and heme 2 (or BH or b566) is high-potential and absorbs at about 566 nm.</text>
</comment>
<comment type="similarity">
    <text evidence="3 4">Belongs to the cytochrome b family.</text>
</comment>
<comment type="caution">
    <text evidence="2">The full-length protein contains only eight transmembrane helices, not nine as predicted by bioinformatics tools.</text>
</comment>
<geneLocation type="mitochondrion"/>
<dbReference type="EMBL" id="AF197867">
    <property type="protein sequence ID" value="AAF13446.1"/>
    <property type="molecule type" value="Genomic_DNA"/>
</dbReference>
<dbReference type="EMBL" id="X60942">
    <property type="protein sequence ID" value="CAA43277.1"/>
    <property type="molecule type" value="Genomic_DNA"/>
</dbReference>
<dbReference type="PIR" id="S22925">
    <property type="entry name" value="S22925"/>
</dbReference>
<dbReference type="GO" id="GO:0005743">
    <property type="term" value="C:mitochondrial inner membrane"/>
    <property type="evidence" value="ECO:0007669"/>
    <property type="project" value="UniProtKB-SubCell"/>
</dbReference>
<dbReference type="GO" id="GO:0045275">
    <property type="term" value="C:respiratory chain complex III"/>
    <property type="evidence" value="ECO:0007669"/>
    <property type="project" value="InterPro"/>
</dbReference>
<dbReference type="GO" id="GO:0046872">
    <property type="term" value="F:metal ion binding"/>
    <property type="evidence" value="ECO:0007669"/>
    <property type="project" value="UniProtKB-KW"/>
</dbReference>
<dbReference type="GO" id="GO:0008121">
    <property type="term" value="F:ubiquinol-cytochrome-c reductase activity"/>
    <property type="evidence" value="ECO:0007669"/>
    <property type="project" value="InterPro"/>
</dbReference>
<dbReference type="GO" id="GO:0006122">
    <property type="term" value="P:mitochondrial electron transport, ubiquinol to cytochrome c"/>
    <property type="evidence" value="ECO:0007669"/>
    <property type="project" value="TreeGrafter"/>
</dbReference>
<dbReference type="CDD" id="cd00290">
    <property type="entry name" value="cytochrome_b_C"/>
    <property type="match status" value="1"/>
</dbReference>
<dbReference type="CDD" id="cd00284">
    <property type="entry name" value="Cytochrome_b_N"/>
    <property type="match status" value="1"/>
</dbReference>
<dbReference type="FunFam" id="1.20.810.10:FF:000002">
    <property type="entry name" value="Cytochrome b"/>
    <property type="match status" value="1"/>
</dbReference>
<dbReference type="Gene3D" id="1.20.810.10">
    <property type="entry name" value="Cytochrome Bc1 Complex, Chain C"/>
    <property type="match status" value="1"/>
</dbReference>
<dbReference type="InterPro" id="IPR005798">
    <property type="entry name" value="Cyt_b/b6_C"/>
</dbReference>
<dbReference type="InterPro" id="IPR036150">
    <property type="entry name" value="Cyt_b/b6_C_sf"/>
</dbReference>
<dbReference type="InterPro" id="IPR005797">
    <property type="entry name" value="Cyt_b/b6_N"/>
</dbReference>
<dbReference type="InterPro" id="IPR027387">
    <property type="entry name" value="Cytb/b6-like_sf"/>
</dbReference>
<dbReference type="InterPro" id="IPR030689">
    <property type="entry name" value="Cytochrome_b"/>
</dbReference>
<dbReference type="InterPro" id="IPR048260">
    <property type="entry name" value="Cytochrome_b_C_euk/bac"/>
</dbReference>
<dbReference type="InterPro" id="IPR048259">
    <property type="entry name" value="Cytochrome_b_N_euk/bac"/>
</dbReference>
<dbReference type="InterPro" id="IPR016174">
    <property type="entry name" value="Di-haem_cyt_TM"/>
</dbReference>
<dbReference type="PANTHER" id="PTHR19271">
    <property type="entry name" value="CYTOCHROME B"/>
    <property type="match status" value="1"/>
</dbReference>
<dbReference type="PANTHER" id="PTHR19271:SF16">
    <property type="entry name" value="CYTOCHROME B"/>
    <property type="match status" value="1"/>
</dbReference>
<dbReference type="Pfam" id="PF00032">
    <property type="entry name" value="Cytochrom_B_C"/>
    <property type="match status" value="1"/>
</dbReference>
<dbReference type="Pfam" id="PF00033">
    <property type="entry name" value="Cytochrome_B"/>
    <property type="match status" value="1"/>
</dbReference>
<dbReference type="PIRSF" id="PIRSF038885">
    <property type="entry name" value="COB"/>
    <property type="match status" value="1"/>
</dbReference>
<dbReference type="SUPFAM" id="SSF81648">
    <property type="entry name" value="a domain/subunit of cytochrome bc1 complex (Ubiquinol-cytochrome c reductase)"/>
    <property type="match status" value="1"/>
</dbReference>
<dbReference type="SUPFAM" id="SSF81342">
    <property type="entry name" value="Transmembrane di-heme cytochromes"/>
    <property type="match status" value="1"/>
</dbReference>
<dbReference type="PROSITE" id="PS51003">
    <property type="entry name" value="CYTB_CTER"/>
    <property type="match status" value="1"/>
</dbReference>
<dbReference type="PROSITE" id="PS51002">
    <property type="entry name" value="CYTB_NTER"/>
    <property type="match status" value="1"/>
</dbReference>
<organism>
    <name type="scientific">Gymnorhina tibicen</name>
    <name type="common">Australian magpie</name>
    <name type="synonym">Cracticus tibicen</name>
    <dbReference type="NCBI Taxonomy" id="9132"/>
    <lineage>
        <taxon>Eukaryota</taxon>
        <taxon>Metazoa</taxon>
        <taxon>Chordata</taxon>
        <taxon>Craniata</taxon>
        <taxon>Vertebrata</taxon>
        <taxon>Euteleostomi</taxon>
        <taxon>Archelosauria</taxon>
        <taxon>Archosauria</taxon>
        <taxon>Dinosauria</taxon>
        <taxon>Saurischia</taxon>
        <taxon>Theropoda</taxon>
        <taxon>Coelurosauria</taxon>
        <taxon>Aves</taxon>
        <taxon>Neognathae</taxon>
        <taxon>Neoaves</taxon>
        <taxon>Telluraves</taxon>
        <taxon>Australaves</taxon>
        <taxon>Passeriformes</taxon>
        <taxon>Artamidae</taxon>
        <taxon>Gymnorhina</taxon>
    </lineage>
</organism>
<proteinExistence type="inferred from homology"/>
<sequence length="380" mass="42566">MALNLRKNHPILKIINDSLVDLPTPSNISAWWNFGSLLGICLMTQIITGLLLAMHYTADTTLAFSSVAHMCRNVQFGWLIRNLHANGASFFFICIYLHIGRGFYYGSYLNKETWNIGVILPPTLMATAFVGYVLPWGQMSFWGATVITNLFSAIPYIGQTLVEWAWGGFSVDNPTLTRFFALHFLLLFVTVGLTLVHLTFLHETGSNNPLGIPSDCDKIPFHPYYSIKDMLGFALMLILLATMALFSPNLLGDPENFTPANPLVTPPHIKPEWYFLFAYAILRSIPNKLGGVLALAASVLVLFLVPLLHKSKQRSMTFRPLLPFLFWTLVANLLILTWVGSQPVEHPFIIIGQVASFTYFTXILVLFPIASVLENKMLNL</sequence>
<reference key="1">
    <citation type="journal article" date="2000" name="Proc. R. Soc. B">
        <title>What is not a bird of paradise? Molecular and morphological evidence places Macgregoria in the Meliphagidae and the Cnemophilinae near the base of the corvoid tree.</title>
        <authorList>
            <person name="Cracraft J."/>
            <person name="Feinstein J."/>
        </authorList>
    </citation>
    <scope>NUCLEOTIDE SEQUENCE [GENOMIC DNA]</scope>
</reference>
<reference key="2">
    <citation type="journal article" date="1991" name="Proc. R. Soc. B">
        <title>Mitochondrial resolution of a deep branch in the genealogical tree for perching birds.</title>
        <authorList>
            <person name="Edwards S.V."/>
            <person name="Arctander P."/>
            <person name="Wilson A.C."/>
        </authorList>
    </citation>
    <scope>NUCLEOTIDE SEQUENCE [GENOMIC DNA] OF 34-341</scope>
</reference>
<reference key="3">
    <citation type="journal article" date="1996" name="Proc. R. Soc. B">
        <authorList>
            <person name="Edwards S.V."/>
            <person name="Arctander P."/>
        </authorList>
    </citation>
    <scope>ERRATUM OF PUBMED:1676522</scope>
</reference>
<name>CYB_GYMTI</name>